<reference key="1">
    <citation type="journal article" date="2008" name="BMC Genomics">
        <title>Acidithiobacillus ferrooxidans metabolism: from genome sequence to industrial applications.</title>
        <authorList>
            <person name="Valdes J."/>
            <person name="Pedroso I."/>
            <person name="Quatrini R."/>
            <person name="Dodson R.J."/>
            <person name="Tettelin H."/>
            <person name="Blake R. II"/>
            <person name="Eisen J.A."/>
            <person name="Holmes D.S."/>
        </authorList>
    </citation>
    <scope>NUCLEOTIDE SEQUENCE [LARGE SCALE GENOMIC DNA]</scope>
    <source>
        <strain>ATCC 23270 / DSM 14882 / CIP 104768 / NCIMB 8455</strain>
    </source>
</reference>
<accession>B7J4R9</accession>
<organism>
    <name type="scientific">Acidithiobacillus ferrooxidans (strain ATCC 23270 / DSM 14882 / CIP 104768 / NCIMB 8455)</name>
    <name type="common">Ferrobacillus ferrooxidans (strain ATCC 23270)</name>
    <dbReference type="NCBI Taxonomy" id="243159"/>
    <lineage>
        <taxon>Bacteria</taxon>
        <taxon>Pseudomonadati</taxon>
        <taxon>Pseudomonadota</taxon>
        <taxon>Acidithiobacillia</taxon>
        <taxon>Acidithiobacillales</taxon>
        <taxon>Acidithiobacillaceae</taxon>
        <taxon>Acidithiobacillus</taxon>
    </lineage>
</organism>
<gene>
    <name evidence="1" type="primary">tgt</name>
    <name type="ordered locus">AFE_2059</name>
</gene>
<dbReference type="EC" id="2.4.2.29" evidence="1"/>
<dbReference type="EMBL" id="CP001219">
    <property type="protein sequence ID" value="ACK79529.1"/>
    <property type="molecule type" value="Genomic_DNA"/>
</dbReference>
<dbReference type="RefSeq" id="WP_012536938.1">
    <property type="nucleotide sequence ID" value="NC_011761.1"/>
</dbReference>
<dbReference type="SMR" id="B7J4R9"/>
<dbReference type="STRING" id="243159.AFE_2059"/>
<dbReference type="PaxDb" id="243159-AFE_2059"/>
<dbReference type="GeneID" id="65281195"/>
<dbReference type="KEGG" id="afr:AFE_2059"/>
<dbReference type="eggNOG" id="COG0343">
    <property type="taxonomic scope" value="Bacteria"/>
</dbReference>
<dbReference type="HOGENOM" id="CLU_022060_0_1_6"/>
<dbReference type="UniPathway" id="UPA00392"/>
<dbReference type="Proteomes" id="UP000001362">
    <property type="component" value="Chromosome"/>
</dbReference>
<dbReference type="GO" id="GO:0005829">
    <property type="term" value="C:cytosol"/>
    <property type="evidence" value="ECO:0007669"/>
    <property type="project" value="TreeGrafter"/>
</dbReference>
<dbReference type="GO" id="GO:0046872">
    <property type="term" value="F:metal ion binding"/>
    <property type="evidence" value="ECO:0007669"/>
    <property type="project" value="UniProtKB-KW"/>
</dbReference>
<dbReference type="GO" id="GO:0008479">
    <property type="term" value="F:tRNA-guanosine(34) queuine transglycosylase activity"/>
    <property type="evidence" value="ECO:0007669"/>
    <property type="project" value="UniProtKB-UniRule"/>
</dbReference>
<dbReference type="GO" id="GO:0008616">
    <property type="term" value="P:queuosine biosynthetic process"/>
    <property type="evidence" value="ECO:0007669"/>
    <property type="project" value="UniProtKB-UniRule"/>
</dbReference>
<dbReference type="GO" id="GO:0002099">
    <property type="term" value="P:tRNA wobble guanine modification"/>
    <property type="evidence" value="ECO:0007669"/>
    <property type="project" value="TreeGrafter"/>
</dbReference>
<dbReference type="GO" id="GO:0101030">
    <property type="term" value="P:tRNA-guanine transglycosylation"/>
    <property type="evidence" value="ECO:0007669"/>
    <property type="project" value="InterPro"/>
</dbReference>
<dbReference type="FunFam" id="3.20.20.105:FF:000001">
    <property type="entry name" value="Queuine tRNA-ribosyltransferase"/>
    <property type="match status" value="1"/>
</dbReference>
<dbReference type="Gene3D" id="3.20.20.105">
    <property type="entry name" value="Queuine tRNA-ribosyltransferase-like"/>
    <property type="match status" value="1"/>
</dbReference>
<dbReference type="HAMAP" id="MF_00168">
    <property type="entry name" value="Q_tRNA_Tgt"/>
    <property type="match status" value="1"/>
</dbReference>
<dbReference type="InterPro" id="IPR050076">
    <property type="entry name" value="ArchSynthase1/Queuine_TRR"/>
</dbReference>
<dbReference type="InterPro" id="IPR004803">
    <property type="entry name" value="TGT"/>
</dbReference>
<dbReference type="InterPro" id="IPR036511">
    <property type="entry name" value="TGT-like_sf"/>
</dbReference>
<dbReference type="InterPro" id="IPR002616">
    <property type="entry name" value="tRNA_ribo_trans-like"/>
</dbReference>
<dbReference type="NCBIfam" id="TIGR00430">
    <property type="entry name" value="Q_tRNA_tgt"/>
    <property type="match status" value="1"/>
</dbReference>
<dbReference type="NCBIfam" id="TIGR00449">
    <property type="entry name" value="tgt_general"/>
    <property type="match status" value="1"/>
</dbReference>
<dbReference type="PANTHER" id="PTHR46499">
    <property type="entry name" value="QUEUINE TRNA-RIBOSYLTRANSFERASE"/>
    <property type="match status" value="1"/>
</dbReference>
<dbReference type="PANTHER" id="PTHR46499:SF1">
    <property type="entry name" value="QUEUINE TRNA-RIBOSYLTRANSFERASE"/>
    <property type="match status" value="1"/>
</dbReference>
<dbReference type="Pfam" id="PF01702">
    <property type="entry name" value="TGT"/>
    <property type="match status" value="1"/>
</dbReference>
<dbReference type="SUPFAM" id="SSF51713">
    <property type="entry name" value="tRNA-guanine transglycosylase"/>
    <property type="match status" value="1"/>
</dbReference>
<protein>
    <recommendedName>
        <fullName evidence="1">Queuine tRNA-ribosyltransferase</fullName>
        <ecNumber evidence="1">2.4.2.29</ecNumber>
    </recommendedName>
    <alternativeName>
        <fullName evidence="1">Guanine insertion enzyme</fullName>
    </alternativeName>
    <alternativeName>
        <fullName evidence="1">tRNA-guanine transglycosylase</fullName>
    </alternativeName>
</protein>
<sequence length="371" mass="41070">MSIFQLLARDGAARRGTIRLPRGTVQTPAFMPVGTYGTVKAMSPEELKTLGAEIILGNTFHLFLRPGLEVISAVGGLHRMMHWDRPILTDSGGFQVFSLGALRKLTEAGVQFRAPTDGHMVFLGPEESMQIQAALGSDIAMVFDECTPHPASYEEARVSMELSLRWAARSHAAYAGPGELFGIVQGGMYADLRRRSLAGLQRLDFPGLAIGGLSVGESKVEMMQVLDDLMPHMPADRPRYLMGVGTPEDLVEGVRRGVDMFDCVMPTRNARNGWLFTRDGVLKLRNARYEKDVLPPDPACACYTCQNYSRAYLRHLQRSHEILGARLNTLHNLHYYQELMAGLREAIAAGRLDAYADDFYRRRRAGSLVGA</sequence>
<evidence type="ECO:0000255" key="1">
    <source>
        <dbReference type="HAMAP-Rule" id="MF_00168"/>
    </source>
</evidence>
<keyword id="KW-0328">Glycosyltransferase</keyword>
<keyword id="KW-0479">Metal-binding</keyword>
<keyword id="KW-0671">Queuosine biosynthesis</keyword>
<keyword id="KW-1185">Reference proteome</keyword>
<keyword id="KW-0808">Transferase</keyword>
<keyword id="KW-0819">tRNA processing</keyword>
<keyword id="KW-0862">Zinc</keyword>
<proteinExistence type="inferred from homology"/>
<feature type="chain" id="PRO_1000197972" description="Queuine tRNA-ribosyltransferase">
    <location>
        <begin position="1"/>
        <end position="371"/>
    </location>
</feature>
<feature type="region of interest" description="RNA binding" evidence="1">
    <location>
        <begin position="243"/>
        <end position="249"/>
    </location>
</feature>
<feature type="region of interest" description="RNA binding; important for wobble base 34 recognition" evidence="1">
    <location>
        <begin position="267"/>
        <end position="271"/>
    </location>
</feature>
<feature type="active site" description="Proton acceptor" evidence="1">
    <location>
        <position position="90"/>
    </location>
</feature>
<feature type="active site" description="Nucleophile" evidence="1">
    <location>
        <position position="262"/>
    </location>
</feature>
<feature type="binding site" evidence="1">
    <location>
        <begin position="90"/>
        <end position="94"/>
    </location>
    <ligand>
        <name>substrate</name>
    </ligand>
</feature>
<feature type="binding site" evidence="1">
    <location>
        <position position="144"/>
    </location>
    <ligand>
        <name>substrate</name>
    </ligand>
</feature>
<feature type="binding site" evidence="1">
    <location>
        <position position="185"/>
    </location>
    <ligand>
        <name>substrate</name>
    </ligand>
</feature>
<feature type="binding site" evidence="1">
    <location>
        <position position="212"/>
    </location>
    <ligand>
        <name>substrate</name>
    </ligand>
</feature>
<feature type="binding site" evidence="1">
    <location>
        <position position="300"/>
    </location>
    <ligand>
        <name>Zn(2+)</name>
        <dbReference type="ChEBI" id="CHEBI:29105"/>
    </ligand>
</feature>
<feature type="binding site" evidence="1">
    <location>
        <position position="302"/>
    </location>
    <ligand>
        <name>Zn(2+)</name>
        <dbReference type="ChEBI" id="CHEBI:29105"/>
    </ligand>
</feature>
<feature type="binding site" evidence="1">
    <location>
        <position position="305"/>
    </location>
    <ligand>
        <name>Zn(2+)</name>
        <dbReference type="ChEBI" id="CHEBI:29105"/>
    </ligand>
</feature>
<feature type="binding site" evidence="1">
    <location>
        <position position="331"/>
    </location>
    <ligand>
        <name>Zn(2+)</name>
        <dbReference type="ChEBI" id="CHEBI:29105"/>
    </ligand>
</feature>
<comment type="function">
    <text evidence="1">Catalyzes the base-exchange of a guanine (G) residue with the queuine precursor 7-aminomethyl-7-deazaguanine (PreQ1) at position 34 (anticodon wobble position) in tRNAs with GU(N) anticodons (tRNA-Asp, -Asn, -His and -Tyr). Catalysis occurs through a double-displacement mechanism. The nucleophile active site attacks the C1' of nucleotide 34 to detach the guanine base from the RNA, forming a covalent enzyme-RNA intermediate. The proton acceptor active site deprotonates the incoming PreQ1, allowing a nucleophilic attack on the C1' of the ribose to form the product. After dissociation, two additional enzymatic reactions on the tRNA convert PreQ1 to queuine (Q), resulting in the hypermodified nucleoside queuosine (7-(((4,5-cis-dihydroxy-2-cyclopenten-1-yl)amino)methyl)-7-deazaguanosine).</text>
</comment>
<comment type="catalytic activity">
    <reaction evidence="1">
        <text>7-aminomethyl-7-carbaguanine + guanosine(34) in tRNA = 7-aminomethyl-7-carbaguanosine(34) in tRNA + guanine</text>
        <dbReference type="Rhea" id="RHEA:24104"/>
        <dbReference type="Rhea" id="RHEA-COMP:10341"/>
        <dbReference type="Rhea" id="RHEA-COMP:10342"/>
        <dbReference type="ChEBI" id="CHEBI:16235"/>
        <dbReference type="ChEBI" id="CHEBI:58703"/>
        <dbReference type="ChEBI" id="CHEBI:74269"/>
        <dbReference type="ChEBI" id="CHEBI:82833"/>
        <dbReference type="EC" id="2.4.2.29"/>
    </reaction>
</comment>
<comment type="cofactor">
    <cofactor evidence="1">
        <name>Zn(2+)</name>
        <dbReference type="ChEBI" id="CHEBI:29105"/>
    </cofactor>
    <text evidence="1">Binds 1 zinc ion per subunit.</text>
</comment>
<comment type="pathway">
    <text evidence="1">tRNA modification; tRNA-queuosine biosynthesis.</text>
</comment>
<comment type="subunit">
    <text evidence="1">Homodimer. Within each dimer, one monomer is responsible for RNA recognition and catalysis, while the other monomer binds to the replacement base PreQ1.</text>
</comment>
<comment type="similarity">
    <text evidence="1">Belongs to the queuine tRNA-ribosyltransferase family.</text>
</comment>
<name>TGT_ACIF2</name>